<protein>
    <recommendedName>
        <fullName>Tetrahydromethanopterin S-methyltransferase subunit D</fullName>
        <ecNumber>7.2.1.4</ecNumber>
    </recommendedName>
    <alternativeName>
        <fullName>N5-methyltetrahydromethanopterin--coenzyme M methyltransferase subunit D</fullName>
    </alternativeName>
</protein>
<sequence>MIDAILGNILWMVFIIIGGVLISWGVHFVPVGGAPAAMAQATGVGTGTVQLATGAGLTGLVSAGFMMNVTDNFPLIVASGAVGAMIMIAVTMIVGTWIYVYGVGCVPSSAKVKVDPITKYRQDLYVSQGTEGHGIPTVSFVSGVIGAALGGIGGSLIYYSLIEVGVSVGLERVGVTSAVTGNSLVAVAAIFAIGIFLVNAVIPSYNIGGTIEGFHDPKFKKWPKAVISSVVASILCAIVAVIAIAQLGGI</sequence>
<evidence type="ECO:0000250" key="1"/>
<evidence type="ECO:0000255" key="2"/>
<evidence type="ECO:0000305" key="3"/>
<reference key="1">
    <citation type="journal article" date="1998" name="FEBS Lett.">
        <title>Cloning, sequencing and expression of the genes encoding the sodium translocating N5-methyltetrahydromethanopterin:coenzyme M methyltransferase of the methylotrophic archaeon Methanosarcina mazei Go1.</title>
        <authorList>
            <person name="Lienard T."/>
            <person name="Gottschalk G."/>
        </authorList>
    </citation>
    <scope>NUCLEOTIDE SEQUENCE [GENOMIC DNA]</scope>
    <source>
        <strain>ATCC BAA-159 / DSM 3647 / Goe1 / Go1 / JCM 11833 / OCM 88</strain>
    </source>
</reference>
<reference key="2">
    <citation type="journal article" date="2002" name="J. Mol. Microbiol. Biotechnol.">
        <title>The genome of Methanosarcina mazei: evidence for lateral gene transfer between Bacteria and Archaea.</title>
        <authorList>
            <person name="Deppenmeier U."/>
            <person name="Johann A."/>
            <person name="Hartsch T."/>
            <person name="Merkl R."/>
            <person name="Schmitz R.A."/>
            <person name="Martinez-Arias R."/>
            <person name="Henne A."/>
            <person name="Wiezer A."/>
            <person name="Baeumer S."/>
            <person name="Jacobi C."/>
            <person name="Brueggemann H."/>
            <person name="Lienard T."/>
            <person name="Christmann A."/>
            <person name="Boemecke M."/>
            <person name="Steckel S."/>
            <person name="Bhattacharyya A."/>
            <person name="Lykidis A."/>
            <person name="Overbeek R."/>
            <person name="Klenk H.-P."/>
            <person name="Gunsalus R.P."/>
            <person name="Fritz H.-J."/>
            <person name="Gottschalk G."/>
        </authorList>
    </citation>
    <scope>NUCLEOTIDE SEQUENCE [LARGE SCALE GENOMIC DNA]</scope>
    <source>
        <strain>ATCC BAA-159 / DSM 3647 / Goe1 / Go1 / JCM 11833 / OCM 88</strain>
    </source>
</reference>
<reference key="3">
    <citation type="journal article" date="1996" name="Eur. J. Biochem.">
        <title>Sodium ion translocation by N5-methyltetrahydromethanopterin: coenzyme M methyltransferase from Methanosarcina mazei Go1 reconstituted in ether lipid liposomes.</title>
        <authorList>
            <person name="Lienard T."/>
            <person name="Becher B."/>
            <person name="Marschall M."/>
            <person name="Bowien S."/>
            <person name="Gottschalk G."/>
        </authorList>
    </citation>
    <scope>PROTEIN SEQUENCE OF 1-15</scope>
    <source>
        <strain>ATCC BAA-159 / DSM 3647 / Goe1 / Go1 / JCM 11833 / OCM 88</strain>
    </source>
</reference>
<organism>
    <name type="scientific">Methanosarcina mazei (strain ATCC BAA-159 / DSM 3647 / Goe1 / Go1 / JCM 11833 / OCM 88)</name>
    <name type="common">Methanosarcina frisia</name>
    <dbReference type="NCBI Taxonomy" id="192952"/>
    <lineage>
        <taxon>Archaea</taxon>
        <taxon>Methanobacteriati</taxon>
        <taxon>Methanobacteriota</taxon>
        <taxon>Stenosarchaea group</taxon>
        <taxon>Methanomicrobia</taxon>
        <taxon>Methanosarcinales</taxon>
        <taxon>Methanosarcinaceae</taxon>
        <taxon>Methanosarcina</taxon>
    </lineage>
</organism>
<comment type="function">
    <text>Part of a complex that catalyzes the formation of methyl-coenzyme M and tetrahydromethanopterin from coenzyme M and methyl-tetrahydromethanopterin. This is an energy-conserving, sodium-ion translocating step.</text>
</comment>
<comment type="catalytic activity">
    <reaction>
        <text>5-methyl-5,6,7,8-tetrahydromethanopterin + coenzyme M + 2 Na(+)(in) = 5,6,7,8-tetrahydromethanopterin + methyl-coenzyme M + 2 Na(+)(out)</text>
        <dbReference type="Rhea" id="RHEA:53492"/>
        <dbReference type="ChEBI" id="CHEBI:29101"/>
        <dbReference type="ChEBI" id="CHEBI:58103"/>
        <dbReference type="ChEBI" id="CHEBI:58116"/>
        <dbReference type="ChEBI" id="CHEBI:58286"/>
        <dbReference type="ChEBI" id="CHEBI:58319"/>
        <dbReference type="EC" id="7.2.1.4"/>
    </reaction>
</comment>
<comment type="pathway">
    <text>One-carbon metabolism; methanogenesis from CO(2); methyl-coenzyme M from 5,10-methylene-5,6,7,8-tetrahydromethanopterin: step 2/2.</text>
</comment>
<comment type="subunit">
    <text evidence="1">The complex is composed of 8 subunits; MtrA, MtrB, MtrC, MtrD, MtrE, MtrF, MtrG and MtrH.</text>
</comment>
<comment type="subcellular location">
    <subcellularLocation>
        <location evidence="3">Cell membrane</location>
        <topology evidence="3">Multi-pass membrane protein</topology>
    </subcellularLocation>
</comment>
<comment type="similarity">
    <text evidence="3">Belongs to the MtrD family.</text>
</comment>
<name>MTRD_METMA</name>
<feature type="chain" id="PRO_0000147532" description="Tetrahydromethanopterin S-methyltransferase subunit D">
    <location>
        <begin position="1"/>
        <end position="250"/>
    </location>
</feature>
<feature type="transmembrane region" description="Helical" evidence="2">
    <location>
        <begin position="9"/>
        <end position="29"/>
    </location>
</feature>
<feature type="transmembrane region" description="Helical" evidence="2">
    <location>
        <begin position="47"/>
        <end position="67"/>
    </location>
</feature>
<feature type="transmembrane region" description="Helical" evidence="2">
    <location>
        <begin position="75"/>
        <end position="95"/>
    </location>
</feature>
<feature type="transmembrane region" description="Helical" evidence="2">
    <location>
        <begin position="138"/>
        <end position="158"/>
    </location>
</feature>
<feature type="transmembrane region" description="Helical" evidence="2">
    <location>
        <begin position="184"/>
        <end position="204"/>
    </location>
</feature>
<feature type="transmembrane region" description="Helical" evidence="2">
    <location>
        <begin position="225"/>
        <end position="245"/>
    </location>
</feature>
<feature type="sequence conflict" description="In Ref. 3; AA sequence." evidence="3" ref="3">
    <original>L</original>
    <variation>F</variation>
    <location>
        <position position="10"/>
    </location>
</feature>
<feature type="sequence conflict" description="In Ref. 1; AAC38331." evidence="3" ref="1">
    <original>SWGVH</original>
    <variation>PGGGS</variation>
    <location>
        <begin position="23"/>
        <end position="27"/>
    </location>
</feature>
<proteinExistence type="evidence at protein level"/>
<dbReference type="EC" id="7.2.1.4"/>
<dbReference type="EMBL" id="AF042381">
    <property type="protein sequence ID" value="AAC38331.1"/>
    <property type="molecule type" value="Genomic_DNA"/>
</dbReference>
<dbReference type="EMBL" id="AE008384">
    <property type="protein sequence ID" value="AAM31242.1"/>
    <property type="molecule type" value="Genomic_DNA"/>
</dbReference>
<dbReference type="RefSeq" id="WP_011033492.1">
    <property type="nucleotide sequence ID" value="NC_003901.1"/>
</dbReference>
<dbReference type="SMR" id="P80653"/>
<dbReference type="GeneID" id="1479888"/>
<dbReference type="GeneID" id="82160596"/>
<dbReference type="KEGG" id="mma:MM_1546"/>
<dbReference type="PATRIC" id="fig|192952.21.peg.1787"/>
<dbReference type="eggNOG" id="arCOG04869">
    <property type="taxonomic scope" value="Archaea"/>
</dbReference>
<dbReference type="HOGENOM" id="CLU_1109510_0_0_2"/>
<dbReference type="BRENDA" id="2.1.1.86">
    <property type="organism ID" value="3270"/>
</dbReference>
<dbReference type="UniPathway" id="UPA00640">
    <property type="reaction ID" value="UER00698"/>
</dbReference>
<dbReference type="Proteomes" id="UP000000595">
    <property type="component" value="Chromosome"/>
</dbReference>
<dbReference type="GO" id="GO:0005737">
    <property type="term" value="C:cytoplasm"/>
    <property type="evidence" value="ECO:0007669"/>
    <property type="project" value="InterPro"/>
</dbReference>
<dbReference type="GO" id="GO:0005886">
    <property type="term" value="C:plasma membrane"/>
    <property type="evidence" value="ECO:0007669"/>
    <property type="project" value="UniProtKB-SubCell"/>
</dbReference>
<dbReference type="GO" id="GO:0012506">
    <property type="term" value="C:vesicle membrane"/>
    <property type="evidence" value="ECO:0007669"/>
    <property type="project" value="InterPro"/>
</dbReference>
<dbReference type="GO" id="GO:0030269">
    <property type="term" value="F:tetrahydromethanopterin S-methyltransferase activity"/>
    <property type="evidence" value="ECO:0007669"/>
    <property type="project" value="UniProtKB-UniRule"/>
</dbReference>
<dbReference type="GO" id="GO:0019386">
    <property type="term" value="P:methanogenesis, from carbon dioxide"/>
    <property type="evidence" value="ECO:0007669"/>
    <property type="project" value="UniProtKB-UniRule"/>
</dbReference>
<dbReference type="GO" id="GO:0032259">
    <property type="term" value="P:methylation"/>
    <property type="evidence" value="ECO:0007669"/>
    <property type="project" value="UniProtKB-KW"/>
</dbReference>
<dbReference type="GO" id="GO:0006730">
    <property type="term" value="P:one-carbon metabolic process"/>
    <property type="evidence" value="ECO:0007669"/>
    <property type="project" value="UniProtKB-UniRule"/>
</dbReference>
<dbReference type="HAMAP" id="MF_01097">
    <property type="entry name" value="MtrD"/>
    <property type="match status" value="1"/>
</dbReference>
<dbReference type="InterPro" id="IPR005779">
    <property type="entry name" value="MeTrfase_D"/>
</dbReference>
<dbReference type="NCBIfam" id="TIGR01112">
    <property type="entry name" value="mtrD"/>
    <property type="match status" value="1"/>
</dbReference>
<dbReference type="Pfam" id="PF04207">
    <property type="entry name" value="MtrD"/>
    <property type="match status" value="1"/>
</dbReference>
<dbReference type="PIRSF" id="PIRSF016552">
    <property type="entry name" value="MtrD"/>
    <property type="match status" value="1"/>
</dbReference>
<gene>
    <name type="primary">mtrD</name>
    <name type="ordered locus">MM_1546</name>
</gene>
<keyword id="KW-1003">Cell membrane</keyword>
<keyword id="KW-0903">Direct protein sequencing</keyword>
<keyword id="KW-0472">Membrane</keyword>
<keyword id="KW-0484">Methanogenesis</keyword>
<keyword id="KW-0489">Methyltransferase</keyword>
<keyword id="KW-0554">One-carbon metabolism</keyword>
<keyword id="KW-0808">Transferase</keyword>
<keyword id="KW-1278">Translocase</keyword>
<keyword id="KW-0812">Transmembrane</keyword>
<keyword id="KW-1133">Transmembrane helix</keyword>
<accession>P80653</accession>
<accession>O59637</accession>